<protein>
    <recommendedName>
        <fullName evidence="1">Ubiquitin-fold modifier 1</fullName>
    </recommendedName>
</protein>
<comment type="function">
    <text evidence="1">Ubiquitin-like modifier which can be covalently attached via an isopeptide bond to lysine residues of substrate proteins as a monomer or a lysine-linked polymer. The so-called ufmylation, requires the ufm1-activating E1 enzyme uba5, the ufm1-conjugating E2 enzyme ufc1, and the ufm1-ligase E3 enzyme ufl1. Ufmylation is involved in various processes, such as ribosome recycling, response to DNA damage, transcription or reticulophagy (also called ER-phagy) induced in response to endoplasmic reticulum stress.</text>
</comment>
<comment type="subunit">
    <text evidence="1">Interacts with uba5. Interacts with ufc1.</text>
</comment>
<comment type="subcellular location">
    <subcellularLocation>
        <location evidence="1">Nucleus</location>
    </subcellularLocation>
    <subcellularLocation>
        <location evidence="1">Cytoplasm</location>
    </subcellularLocation>
</comment>
<comment type="PTM">
    <text evidence="1">UFM1 precursor is cleaved by UFSP1, promoting its maturation: processing of the C-terminal Ser-Cys dipeptide is required to expose its C-terminal conserved Gly residue.</text>
</comment>
<comment type="similarity">
    <text evidence="2">Belongs to the UFM1 family.</text>
</comment>
<evidence type="ECO:0000250" key="1">
    <source>
        <dbReference type="UniProtKB" id="P61960"/>
    </source>
</evidence>
<evidence type="ECO:0000305" key="2"/>
<keyword id="KW-0963">Cytoplasm</keyword>
<keyword id="KW-1017">Isopeptide bond</keyword>
<keyword id="KW-0539">Nucleus</keyword>
<keyword id="KW-1185">Reference proteome</keyword>
<keyword id="KW-0832">Ubl conjugation</keyword>
<keyword id="KW-0833">Ubl conjugation pathway</keyword>
<dbReference type="EMBL" id="BC167299">
    <property type="protein sequence ID" value="AAI67299.1"/>
    <property type="molecule type" value="mRNA"/>
</dbReference>
<dbReference type="RefSeq" id="NP_001016988.1">
    <property type="nucleotide sequence ID" value="NM_001016988.2"/>
</dbReference>
<dbReference type="SMR" id="B3DL37"/>
<dbReference type="FunCoup" id="B3DL37">
    <property type="interactions" value="3003"/>
</dbReference>
<dbReference type="STRING" id="8364.ENSXETP00000028621"/>
<dbReference type="PaxDb" id="8364-ENSXETP00000056902"/>
<dbReference type="GeneID" id="549742"/>
<dbReference type="KEGG" id="xtr:549742"/>
<dbReference type="AGR" id="Xenbase:XB-GENE-973175"/>
<dbReference type="CTD" id="51569"/>
<dbReference type="Xenbase" id="XB-GENE-973175">
    <property type="gene designation" value="ufm1"/>
</dbReference>
<dbReference type="eggNOG" id="KOG3483">
    <property type="taxonomic scope" value="Eukaryota"/>
</dbReference>
<dbReference type="HOGENOM" id="CLU_175114_0_0_1"/>
<dbReference type="InParanoid" id="B3DL37"/>
<dbReference type="OMA" id="MEHAVGK"/>
<dbReference type="OrthoDB" id="284357at2759"/>
<dbReference type="PhylomeDB" id="B3DL37"/>
<dbReference type="Proteomes" id="UP000008143">
    <property type="component" value="Chromosome 2"/>
</dbReference>
<dbReference type="Bgee" id="ENSXETG00000027207">
    <property type="expression patterns" value="Expressed in egg cell and 13 other cell types or tissues"/>
</dbReference>
<dbReference type="GO" id="GO:0005737">
    <property type="term" value="C:cytoplasm"/>
    <property type="evidence" value="ECO:0000250"/>
    <property type="project" value="UniProtKB"/>
</dbReference>
<dbReference type="GO" id="GO:0005634">
    <property type="term" value="C:nucleus"/>
    <property type="evidence" value="ECO:0000250"/>
    <property type="project" value="UniProtKB"/>
</dbReference>
<dbReference type="GO" id="GO:1990592">
    <property type="term" value="P:protein K69-linked ufmylation"/>
    <property type="evidence" value="ECO:0000250"/>
    <property type="project" value="UniProtKB"/>
</dbReference>
<dbReference type="GO" id="GO:0071569">
    <property type="term" value="P:protein ufmylation"/>
    <property type="evidence" value="ECO:0000250"/>
    <property type="project" value="UniProtKB"/>
</dbReference>
<dbReference type="GO" id="GO:0034976">
    <property type="term" value="P:response to endoplasmic reticulum stress"/>
    <property type="evidence" value="ECO:0000250"/>
    <property type="project" value="UniProtKB"/>
</dbReference>
<dbReference type="GO" id="GO:0061709">
    <property type="term" value="P:reticulophagy"/>
    <property type="evidence" value="ECO:0000250"/>
    <property type="project" value="UniProtKB"/>
</dbReference>
<dbReference type="CDD" id="cd01766">
    <property type="entry name" value="Ubl_UFM1"/>
    <property type="match status" value="1"/>
</dbReference>
<dbReference type="FunFam" id="3.10.20.90:FF:000044">
    <property type="entry name" value="Ubiquitin-fold modifier 1"/>
    <property type="match status" value="1"/>
</dbReference>
<dbReference type="Gene3D" id="3.10.20.90">
    <property type="entry name" value="Phosphatidylinositol 3-kinase Catalytic Subunit, Chain A, domain 1"/>
    <property type="match status" value="1"/>
</dbReference>
<dbReference type="InterPro" id="IPR029071">
    <property type="entry name" value="Ubiquitin-like_domsf"/>
</dbReference>
<dbReference type="InterPro" id="IPR005375">
    <property type="entry name" value="UFM1"/>
</dbReference>
<dbReference type="PANTHER" id="PTHR15825">
    <property type="entry name" value="UBIQUITIN-FOLD MODIFIER 1"/>
    <property type="match status" value="1"/>
</dbReference>
<dbReference type="PANTHER" id="PTHR15825:SF0">
    <property type="entry name" value="UBIQUITIN-FOLD MODIFIER 1"/>
    <property type="match status" value="1"/>
</dbReference>
<dbReference type="Pfam" id="PF03671">
    <property type="entry name" value="Ufm1"/>
    <property type="match status" value="1"/>
</dbReference>
<dbReference type="PIRSF" id="PIRSF038027">
    <property type="entry name" value="Ubiquitin-like_Ufm1"/>
    <property type="match status" value="1"/>
</dbReference>
<dbReference type="SUPFAM" id="SSF54236">
    <property type="entry name" value="Ubiquitin-like"/>
    <property type="match status" value="1"/>
</dbReference>
<accession>B3DL37</accession>
<sequence length="85" mass="9175">MSKVTFKITLTSDPRLPYKVLCVPENTPFTAVLKFAAEEFKVPAATSAIITNDGIGLNPAQTAGNVFLKHGSELRLIPRDRVGSC</sequence>
<reference key="1">
    <citation type="submission" date="2008-06" db="EMBL/GenBank/DDBJ databases">
        <authorList>
            <consortium name="NIH - Xenopus Gene Collection (XGC) project"/>
        </authorList>
    </citation>
    <scope>NUCLEOTIDE SEQUENCE [LARGE SCALE MRNA]</scope>
    <source>
        <tissue>Embryo</tissue>
    </source>
</reference>
<gene>
    <name evidence="1" type="primary">ufm1</name>
</gene>
<feature type="chain" id="PRO_0000391989" description="Ubiquitin-fold modifier 1">
    <location>
        <begin position="1"/>
        <end position="83"/>
    </location>
</feature>
<feature type="propeptide" id="PRO_0000391990" description="Removed in mature form" evidence="1">
    <location>
        <begin position="84"/>
        <end position="85"/>
    </location>
</feature>
<feature type="cross-link" description="Glycyl lysine isopeptide (Lys-Gly) (interchain with G-Cter in UFM1)" evidence="1">
    <location>
        <position position="69"/>
    </location>
</feature>
<feature type="cross-link" description="Glycyl lysine isopeptide (Gly-Lys) (interchain with K-? in acceptor proteins)" evidence="1">
    <location>
        <position position="83"/>
    </location>
</feature>
<organism>
    <name type="scientific">Xenopus tropicalis</name>
    <name type="common">Western clawed frog</name>
    <name type="synonym">Silurana tropicalis</name>
    <dbReference type="NCBI Taxonomy" id="8364"/>
    <lineage>
        <taxon>Eukaryota</taxon>
        <taxon>Metazoa</taxon>
        <taxon>Chordata</taxon>
        <taxon>Craniata</taxon>
        <taxon>Vertebrata</taxon>
        <taxon>Euteleostomi</taxon>
        <taxon>Amphibia</taxon>
        <taxon>Batrachia</taxon>
        <taxon>Anura</taxon>
        <taxon>Pipoidea</taxon>
        <taxon>Pipidae</taxon>
        <taxon>Xenopodinae</taxon>
        <taxon>Xenopus</taxon>
        <taxon>Silurana</taxon>
    </lineage>
</organism>
<proteinExistence type="inferred from homology"/>
<name>UFM1_XENTR</name>